<feature type="chain" id="PRO_0000337443" description="Elongation factor Tu">
    <location>
        <begin position="1"/>
        <end position="396"/>
    </location>
</feature>
<feature type="domain" description="tr-type G">
    <location>
        <begin position="10"/>
        <end position="206"/>
    </location>
</feature>
<feature type="region of interest" description="G1" evidence="1">
    <location>
        <begin position="19"/>
        <end position="26"/>
    </location>
</feature>
<feature type="region of interest" description="G2" evidence="1">
    <location>
        <begin position="60"/>
        <end position="64"/>
    </location>
</feature>
<feature type="region of interest" description="G3" evidence="1">
    <location>
        <begin position="81"/>
        <end position="84"/>
    </location>
</feature>
<feature type="region of interest" description="G4" evidence="1">
    <location>
        <begin position="136"/>
        <end position="139"/>
    </location>
</feature>
<feature type="region of interest" description="G5" evidence="1">
    <location>
        <begin position="174"/>
        <end position="176"/>
    </location>
</feature>
<feature type="binding site" evidence="2">
    <location>
        <begin position="19"/>
        <end position="26"/>
    </location>
    <ligand>
        <name>GTP</name>
        <dbReference type="ChEBI" id="CHEBI:37565"/>
    </ligand>
</feature>
<feature type="binding site" evidence="2">
    <location>
        <position position="26"/>
    </location>
    <ligand>
        <name>Mg(2+)</name>
        <dbReference type="ChEBI" id="CHEBI:18420"/>
    </ligand>
</feature>
<feature type="binding site" evidence="2">
    <location>
        <begin position="81"/>
        <end position="85"/>
    </location>
    <ligand>
        <name>GTP</name>
        <dbReference type="ChEBI" id="CHEBI:37565"/>
    </ligand>
</feature>
<feature type="binding site" evidence="2">
    <location>
        <begin position="136"/>
        <end position="139"/>
    </location>
    <ligand>
        <name>GTP</name>
        <dbReference type="ChEBI" id="CHEBI:37565"/>
    </ligand>
</feature>
<gene>
    <name evidence="2" type="primary">tuf1</name>
    <name type="ordered locus">Noc_2326</name>
</gene>
<gene>
    <name evidence="2" type="primary">tuf2</name>
    <name type="ordered locus">Noc_2338</name>
</gene>
<proteinExistence type="inferred from homology"/>
<evidence type="ECO:0000250" key="1"/>
<evidence type="ECO:0000255" key="2">
    <source>
        <dbReference type="HAMAP-Rule" id="MF_00118"/>
    </source>
</evidence>
<comment type="function">
    <text evidence="2">GTP hydrolase that promotes the GTP-dependent binding of aminoacyl-tRNA to the A-site of ribosomes during protein biosynthesis.</text>
</comment>
<comment type="catalytic activity">
    <reaction evidence="2">
        <text>GTP + H2O = GDP + phosphate + H(+)</text>
        <dbReference type="Rhea" id="RHEA:19669"/>
        <dbReference type="ChEBI" id="CHEBI:15377"/>
        <dbReference type="ChEBI" id="CHEBI:15378"/>
        <dbReference type="ChEBI" id="CHEBI:37565"/>
        <dbReference type="ChEBI" id="CHEBI:43474"/>
        <dbReference type="ChEBI" id="CHEBI:58189"/>
        <dbReference type="EC" id="3.6.5.3"/>
    </reaction>
    <physiologicalReaction direction="left-to-right" evidence="2">
        <dbReference type="Rhea" id="RHEA:19670"/>
    </physiologicalReaction>
</comment>
<comment type="subunit">
    <text evidence="2">Monomer.</text>
</comment>
<comment type="subcellular location">
    <subcellularLocation>
        <location evidence="2">Cytoplasm</location>
    </subcellularLocation>
</comment>
<comment type="similarity">
    <text evidence="2">Belongs to the TRAFAC class translation factor GTPase superfamily. Classic translation factor GTPase family. EF-Tu/EF-1A subfamily.</text>
</comment>
<sequence length="396" mass="43674">MSKSKFERKKPHINVGTIGHVDHGKTTLTAALTRILSEQYGGEFRAYDQIDNAPEERERGITIATSHVEYETEERHYAHVDCPGHADYVKNMITGAAQMDGAVLVVSAADGPMPQTREHILLARQVGVPFILVYLNKADMVDDPELLELVEMEVRELLDSYQFPGDDTPIVVGSALKALEGDTSEIGIPSILKLVEQMDAYIPEPQRAVDQPFLMPIEDVFSISGRGTVVTGRVERGIVKVGEEIEIVGMRETQKTICTGVEMFRKLLDEGRAGDNVGVLLRGTKREDVERGQVLAKPKSITPHTKFYAEVYVLSKDEGGRHTPFFTGYRPQFYFRTTDVTGAIDLPDGVEMVMPGDNIQMTVSLIAPIAMEEGLRFAVREGGRTVGAGVVSKVIE</sequence>
<dbReference type="EC" id="3.6.5.3" evidence="2"/>
<dbReference type="EMBL" id="CP000127">
    <property type="protein sequence ID" value="ABA58784.1"/>
    <property type="molecule type" value="Genomic_DNA"/>
</dbReference>
<dbReference type="EMBL" id="CP000127">
    <property type="protein sequence ID" value="ABA58796.1"/>
    <property type="molecule type" value="Genomic_DNA"/>
</dbReference>
<dbReference type="SMR" id="Q3J8Q0"/>
<dbReference type="FunCoup" id="Q3J8Q0">
    <property type="interactions" value="639"/>
</dbReference>
<dbReference type="STRING" id="323261.Noc_2326"/>
<dbReference type="KEGG" id="noc:Noc_2326"/>
<dbReference type="KEGG" id="noc:Noc_2338"/>
<dbReference type="eggNOG" id="COG0050">
    <property type="taxonomic scope" value="Bacteria"/>
</dbReference>
<dbReference type="HOGENOM" id="CLU_007265_0_2_6"/>
<dbReference type="InParanoid" id="Q3J8Q0"/>
<dbReference type="Proteomes" id="UP000006838">
    <property type="component" value="Chromosome"/>
</dbReference>
<dbReference type="GO" id="GO:0005829">
    <property type="term" value="C:cytosol"/>
    <property type="evidence" value="ECO:0007669"/>
    <property type="project" value="TreeGrafter"/>
</dbReference>
<dbReference type="GO" id="GO:0005525">
    <property type="term" value="F:GTP binding"/>
    <property type="evidence" value="ECO:0007669"/>
    <property type="project" value="UniProtKB-UniRule"/>
</dbReference>
<dbReference type="GO" id="GO:0003924">
    <property type="term" value="F:GTPase activity"/>
    <property type="evidence" value="ECO:0007669"/>
    <property type="project" value="InterPro"/>
</dbReference>
<dbReference type="GO" id="GO:0097216">
    <property type="term" value="F:guanosine tetraphosphate binding"/>
    <property type="evidence" value="ECO:0007669"/>
    <property type="project" value="UniProtKB-ARBA"/>
</dbReference>
<dbReference type="GO" id="GO:0003746">
    <property type="term" value="F:translation elongation factor activity"/>
    <property type="evidence" value="ECO:0007669"/>
    <property type="project" value="UniProtKB-UniRule"/>
</dbReference>
<dbReference type="CDD" id="cd01884">
    <property type="entry name" value="EF_Tu"/>
    <property type="match status" value="1"/>
</dbReference>
<dbReference type="CDD" id="cd03697">
    <property type="entry name" value="EFTU_II"/>
    <property type="match status" value="1"/>
</dbReference>
<dbReference type="CDD" id="cd03707">
    <property type="entry name" value="EFTU_III"/>
    <property type="match status" value="1"/>
</dbReference>
<dbReference type="FunFam" id="2.40.30.10:FF:000001">
    <property type="entry name" value="Elongation factor Tu"/>
    <property type="match status" value="1"/>
</dbReference>
<dbReference type="FunFam" id="3.40.50.300:FF:000003">
    <property type="entry name" value="Elongation factor Tu"/>
    <property type="match status" value="1"/>
</dbReference>
<dbReference type="Gene3D" id="3.40.50.300">
    <property type="entry name" value="P-loop containing nucleotide triphosphate hydrolases"/>
    <property type="match status" value="1"/>
</dbReference>
<dbReference type="Gene3D" id="2.40.30.10">
    <property type="entry name" value="Translation factors"/>
    <property type="match status" value="2"/>
</dbReference>
<dbReference type="HAMAP" id="MF_00118_B">
    <property type="entry name" value="EF_Tu_B"/>
    <property type="match status" value="1"/>
</dbReference>
<dbReference type="InterPro" id="IPR041709">
    <property type="entry name" value="EF-Tu_GTP-bd"/>
</dbReference>
<dbReference type="InterPro" id="IPR050055">
    <property type="entry name" value="EF-Tu_GTPase"/>
</dbReference>
<dbReference type="InterPro" id="IPR004161">
    <property type="entry name" value="EFTu-like_2"/>
</dbReference>
<dbReference type="InterPro" id="IPR033720">
    <property type="entry name" value="EFTU_2"/>
</dbReference>
<dbReference type="InterPro" id="IPR031157">
    <property type="entry name" value="G_TR_CS"/>
</dbReference>
<dbReference type="InterPro" id="IPR027417">
    <property type="entry name" value="P-loop_NTPase"/>
</dbReference>
<dbReference type="InterPro" id="IPR005225">
    <property type="entry name" value="Small_GTP-bd"/>
</dbReference>
<dbReference type="InterPro" id="IPR000795">
    <property type="entry name" value="T_Tr_GTP-bd_dom"/>
</dbReference>
<dbReference type="InterPro" id="IPR009000">
    <property type="entry name" value="Transl_B-barrel_sf"/>
</dbReference>
<dbReference type="InterPro" id="IPR009001">
    <property type="entry name" value="Transl_elong_EF1A/Init_IF2_C"/>
</dbReference>
<dbReference type="InterPro" id="IPR004541">
    <property type="entry name" value="Transl_elong_EFTu/EF1A_bac/org"/>
</dbReference>
<dbReference type="InterPro" id="IPR004160">
    <property type="entry name" value="Transl_elong_EFTu/EF1A_C"/>
</dbReference>
<dbReference type="NCBIfam" id="TIGR00485">
    <property type="entry name" value="EF-Tu"/>
    <property type="match status" value="1"/>
</dbReference>
<dbReference type="NCBIfam" id="NF000766">
    <property type="entry name" value="PRK00049.1"/>
    <property type="match status" value="1"/>
</dbReference>
<dbReference type="NCBIfam" id="NF009372">
    <property type="entry name" value="PRK12735.1"/>
    <property type="match status" value="1"/>
</dbReference>
<dbReference type="NCBIfam" id="NF009373">
    <property type="entry name" value="PRK12736.1"/>
    <property type="match status" value="1"/>
</dbReference>
<dbReference type="NCBIfam" id="TIGR00231">
    <property type="entry name" value="small_GTP"/>
    <property type="match status" value="1"/>
</dbReference>
<dbReference type="PANTHER" id="PTHR43721:SF22">
    <property type="entry name" value="ELONGATION FACTOR TU, MITOCHONDRIAL"/>
    <property type="match status" value="1"/>
</dbReference>
<dbReference type="PANTHER" id="PTHR43721">
    <property type="entry name" value="ELONGATION FACTOR TU-RELATED"/>
    <property type="match status" value="1"/>
</dbReference>
<dbReference type="Pfam" id="PF00009">
    <property type="entry name" value="GTP_EFTU"/>
    <property type="match status" value="1"/>
</dbReference>
<dbReference type="Pfam" id="PF03144">
    <property type="entry name" value="GTP_EFTU_D2"/>
    <property type="match status" value="1"/>
</dbReference>
<dbReference type="Pfam" id="PF03143">
    <property type="entry name" value="GTP_EFTU_D3"/>
    <property type="match status" value="1"/>
</dbReference>
<dbReference type="PRINTS" id="PR00315">
    <property type="entry name" value="ELONGATNFCT"/>
</dbReference>
<dbReference type="SUPFAM" id="SSF50465">
    <property type="entry name" value="EF-Tu/eEF-1alpha/eIF2-gamma C-terminal domain"/>
    <property type="match status" value="1"/>
</dbReference>
<dbReference type="SUPFAM" id="SSF52540">
    <property type="entry name" value="P-loop containing nucleoside triphosphate hydrolases"/>
    <property type="match status" value="1"/>
</dbReference>
<dbReference type="SUPFAM" id="SSF50447">
    <property type="entry name" value="Translation proteins"/>
    <property type="match status" value="1"/>
</dbReference>
<dbReference type="PROSITE" id="PS00301">
    <property type="entry name" value="G_TR_1"/>
    <property type="match status" value="1"/>
</dbReference>
<dbReference type="PROSITE" id="PS51722">
    <property type="entry name" value="G_TR_2"/>
    <property type="match status" value="1"/>
</dbReference>
<reference key="1">
    <citation type="journal article" date="2006" name="Appl. Environ. Microbiol.">
        <title>Complete genome sequence of the marine, chemolithoautotrophic, ammonia-oxidizing bacterium Nitrosococcus oceani ATCC 19707.</title>
        <authorList>
            <person name="Klotz M.G."/>
            <person name="Arp D.J."/>
            <person name="Chain P.S.G."/>
            <person name="El-Sheikh A.F."/>
            <person name="Hauser L.J."/>
            <person name="Hommes N.G."/>
            <person name="Larimer F.W."/>
            <person name="Malfatti S.A."/>
            <person name="Norton J.M."/>
            <person name="Poret-Peterson A.T."/>
            <person name="Vergez L.M."/>
            <person name="Ward B.B."/>
        </authorList>
    </citation>
    <scope>NUCLEOTIDE SEQUENCE [LARGE SCALE GENOMIC DNA]</scope>
    <source>
        <strain>ATCC 19707 / BCRC 17464 / JCM 30415 / NCIMB 11848 / C-107</strain>
    </source>
</reference>
<keyword id="KW-0963">Cytoplasm</keyword>
<keyword id="KW-0251">Elongation factor</keyword>
<keyword id="KW-0342">GTP-binding</keyword>
<keyword id="KW-0378">Hydrolase</keyword>
<keyword id="KW-0460">Magnesium</keyword>
<keyword id="KW-0479">Metal-binding</keyword>
<keyword id="KW-0547">Nucleotide-binding</keyword>
<keyword id="KW-0648">Protein biosynthesis</keyword>
<keyword id="KW-1185">Reference proteome</keyword>
<protein>
    <recommendedName>
        <fullName evidence="2">Elongation factor Tu</fullName>
        <shortName evidence="2">EF-Tu</shortName>
        <ecNumber evidence="2">3.6.5.3</ecNumber>
    </recommendedName>
</protein>
<organism>
    <name type="scientific">Nitrosococcus oceani (strain ATCC 19707 / BCRC 17464 / JCM 30415 / NCIMB 11848 / C-107)</name>
    <dbReference type="NCBI Taxonomy" id="323261"/>
    <lineage>
        <taxon>Bacteria</taxon>
        <taxon>Pseudomonadati</taxon>
        <taxon>Pseudomonadota</taxon>
        <taxon>Gammaproteobacteria</taxon>
        <taxon>Chromatiales</taxon>
        <taxon>Chromatiaceae</taxon>
        <taxon>Nitrosococcus</taxon>
    </lineage>
</organism>
<accession>Q3J8Q0</accession>
<name>EFTU_NITOC</name>